<comment type="function">
    <text evidence="1">Redox regulated molecular chaperone. Protects both thermally unfolding and oxidatively damaged proteins from irreversible aggregation. Plays an important role in the bacterial defense system toward oxidative stress.</text>
</comment>
<comment type="subcellular location">
    <subcellularLocation>
        <location evidence="1">Cytoplasm</location>
    </subcellularLocation>
</comment>
<comment type="PTM">
    <text evidence="1">Under oxidizing conditions two disulfide bonds are formed involving the reactive cysteines. Under reducing conditions zinc is bound to the reactive cysteines and the protein is inactive.</text>
</comment>
<comment type="similarity">
    <text evidence="1">Belongs to the HSP33 family.</text>
</comment>
<dbReference type="EMBL" id="CP000924">
    <property type="protein sequence ID" value="ABY94417.1"/>
    <property type="molecule type" value="Genomic_DNA"/>
</dbReference>
<dbReference type="RefSeq" id="WP_009052585.1">
    <property type="nucleotide sequence ID" value="NC_010321.1"/>
</dbReference>
<dbReference type="SMR" id="B0K8A4"/>
<dbReference type="STRING" id="340099.Teth39_0758"/>
<dbReference type="KEGG" id="tpd:Teth39_0758"/>
<dbReference type="eggNOG" id="COG1281">
    <property type="taxonomic scope" value="Bacteria"/>
</dbReference>
<dbReference type="HOGENOM" id="CLU_054493_1_0_9"/>
<dbReference type="Proteomes" id="UP000002156">
    <property type="component" value="Chromosome"/>
</dbReference>
<dbReference type="GO" id="GO:0005737">
    <property type="term" value="C:cytoplasm"/>
    <property type="evidence" value="ECO:0007669"/>
    <property type="project" value="UniProtKB-SubCell"/>
</dbReference>
<dbReference type="GO" id="GO:0044183">
    <property type="term" value="F:protein folding chaperone"/>
    <property type="evidence" value="ECO:0007669"/>
    <property type="project" value="TreeGrafter"/>
</dbReference>
<dbReference type="GO" id="GO:0051082">
    <property type="term" value="F:unfolded protein binding"/>
    <property type="evidence" value="ECO:0007669"/>
    <property type="project" value="UniProtKB-UniRule"/>
</dbReference>
<dbReference type="GO" id="GO:0042026">
    <property type="term" value="P:protein refolding"/>
    <property type="evidence" value="ECO:0007669"/>
    <property type="project" value="TreeGrafter"/>
</dbReference>
<dbReference type="CDD" id="cd00498">
    <property type="entry name" value="Hsp33"/>
    <property type="match status" value="1"/>
</dbReference>
<dbReference type="Gene3D" id="3.55.30.10">
    <property type="entry name" value="Hsp33 domain"/>
    <property type="match status" value="1"/>
</dbReference>
<dbReference type="Gene3D" id="3.90.1280.10">
    <property type="entry name" value="HSP33 redox switch-like"/>
    <property type="match status" value="1"/>
</dbReference>
<dbReference type="HAMAP" id="MF_00117">
    <property type="entry name" value="HslO"/>
    <property type="match status" value="1"/>
</dbReference>
<dbReference type="InterPro" id="IPR000397">
    <property type="entry name" value="Heat_shock_Hsp33"/>
</dbReference>
<dbReference type="InterPro" id="IPR016154">
    <property type="entry name" value="Heat_shock_Hsp33_C"/>
</dbReference>
<dbReference type="InterPro" id="IPR016153">
    <property type="entry name" value="Heat_shock_Hsp33_N"/>
</dbReference>
<dbReference type="NCBIfam" id="NF001033">
    <property type="entry name" value="PRK00114.1"/>
    <property type="match status" value="1"/>
</dbReference>
<dbReference type="PANTHER" id="PTHR30111">
    <property type="entry name" value="33 KDA CHAPERONIN"/>
    <property type="match status" value="1"/>
</dbReference>
<dbReference type="PANTHER" id="PTHR30111:SF1">
    <property type="entry name" value="33 KDA CHAPERONIN"/>
    <property type="match status" value="1"/>
</dbReference>
<dbReference type="Pfam" id="PF01430">
    <property type="entry name" value="HSP33"/>
    <property type="match status" value="1"/>
</dbReference>
<dbReference type="PIRSF" id="PIRSF005261">
    <property type="entry name" value="Heat_shock_Hsp33"/>
    <property type="match status" value="1"/>
</dbReference>
<dbReference type="SUPFAM" id="SSF64397">
    <property type="entry name" value="Hsp33 domain"/>
    <property type="match status" value="1"/>
</dbReference>
<dbReference type="SUPFAM" id="SSF118352">
    <property type="entry name" value="HSP33 redox switch-like"/>
    <property type="match status" value="1"/>
</dbReference>
<organism>
    <name type="scientific">Thermoanaerobacter pseudethanolicus (strain ATCC 33223 / 39E)</name>
    <name type="common">Clostridium thermohydrosulfuricum</name>
    <dbReference type="NCBI Taxonomy" id="340099"/>
    <lineage>
        <taxon>Bacteria</taxon>
        <taxon>Bacillati</taxon>
        <taxon>Bacillota</taxon>
        <taxon>Clostridia</taxon>
        <taxon>Thermoanaerobacterales</taxon>
        <taxon>Thermoanaerobacteraceae</taxon>
        <taxon>Thermoanaerobacter</taxon>
    </lineage>
</organism>
<accession>B0K8A4</accession>
<protein>
    <recommendedName>
        <fullName evidence="1">33 kDa chaperonin</fullName>
    </recommendedName>
    <alternativeName>
        <fullName evidence="1">Heat shock protein 33 homolog</fullName>
        <shortName evidence="1">HSP33</shortName>
    </alternativeName>
</protein>
<keyword id="KW-0143">Chaperone</keyword>
<keyword id="KW-0963">Cytoplasm</keyword>
<keyword id="KW-1015">Disulfide bond</keyword>
<keyword id="KW-0676">Redox-active center</keyword>
<keyword id="KW-1185">Reference proteome</keyword>
<keyword id="KW-0862">Zinc</keyword>
<gene>
    <name evidence="1" type="primary">hslO</name>
    <name type="ordered locus">Teth39_0758</name>
</gene>
<sequence length="294" mass="31992">MRDYIVRATAYNNKILAIAAFSTQTAQKAKEIHNLTPTTCAALGRALTAVAMMRVMMKGEKDKVTLVIKGDGPIGNIVVVSNYPGIVKGYVGNPTVDLPLSEKGKLDVGKAVGKNGYVTVIKDIGLKEPYVGTVELQTGEIGEDIAYYFYTSEQVPSAVGVGVLVGKEGNVLASGGFIIQLLPNIEEEVVAKVEEALKNISSVTELLRKGYLPEDILNHILGEMGLNILERVDLKYECDCSQERFETAIIALGKEEIKKLIAEGQSVEAVCHFCGKKYLIEESRLKELLRIAEE</sequence>
<evidence type="ECO:0000255" key="1">
    <source>
        <dbReference type="HAMAP-Rule" id="MF_00117"/>
    </source>
</evidence>
<reference key="1">
    <citation type="submission" date="2008-01" db="EMBL/GenBank/DDBJ databases">
        <title>Complete sequence of Thermoanaerobacter pseudethanolicus 39E.</title>
        <authorList>
            <person name="Copeland A."/>
            <person name="Lucas S."/>
            <person name="Lapidus A."/>
            <person name="Barry K."/>
            <person name="Glavina del Rio T."/>
            <person name="Dalin E."/>
            <person name="Tice H."/>
            <person name="Pitluck S."/>
            <person name="Bruce D."/>
            <person name="Goodwin L."/>
            <person name="Saunders E."/>
            <person name="Brettin T."/>
            <person name="Detter J.C."/>
            <person name="Han C."/>
            <person name="Schmutz J."/>
            <person name="Larimer F."/>
            <person name="Land M."/>
            <person name="Hauser L."/>
            <person name="Kyrpides N."/>
            <person name="Lykidis A."/>
            <person name="Hemme C."/>
            <person name="Fields M.W."/>
            <person name="He Z."/>
            <person name="Zhou J."/>
            <person name="Richardson P."/>
        </authorList>
    </citation>
    <scope>NUCLEOTIDE SEQUENCE [LARGE SCALE GENOMIC DNA]</scope>
    <source>
        <strain>ATCC 33223 / DSM 2355 / 39E</strain>
    </source>
</reference>
<feature type="chain" id="PRO_1000095037" description="33 kDa chaperonin">
    <location>
        <begin position="1"/>
        <end position="294"/>
    </location>
</feature>
<feature type="disulfide bond" description="Redox-active" evidence="1">
    <location>
        <begin position="238"/>
        <end position="240"/>
    </location>
</feature>
<feature type="disulfide bond" description="Redox-active" evidence="1">
    <location>
        <begin position="271"/>
        <end position="274"/>
    </location>
</feature>
<proteinExistence type="inferred from homology"/>
<name>HSLO_THEP3</name>